<dbReference type="EC" id="3.10.1.1" evidence="7 15 17"/>
<dbReference type="EMBL" id="U30894">
    <property type="protein sequence ID" value="AAA86530.1"/>
    <property type="molecule type" value="mRNA"/>
</dbReference>
<dbReference type="EMBL" id="U60111">
    <property type="protein sequence ID" value="AAB17952.1"/>
    <property type="molecule type" value="Genomic_DNA"/>
</dbReference>
<dbReference type="EMBL" id="U60107">
    <property type="protein sequence ID" value="AAB17952.1"/>
    <property type="status" value="JOINED"/>
    <property type="molecule type" value="Genomic_DNA"/>
</dbReference>
<dbReference type="EMBL" id="U60108">
    <property type="protein sequence ID" value="AAB17952.1"/>
    <property type="status" value="JOINED"/>
    <property type="molecule type" value="Genomic_DNA"/>
</dbReference>
<dbReference type="EMBL" id="U60109">
    <property type="protein sequence ID" value="AAB17952.1"/>
    <property type="status" value="JOINED"/>
    <property type="molecule type" value="Genomic_DNA"/>
</dbReference>
<dbReference type="EMBL" id="U60110">
    <property type="protein sequence ID" value="AAB17952.1"/>
    <property type="status" value="JOINED"/>
    <property type="molecule type" value="Genomic_DNA"/>
</dbReference>
<dbReference type="EMBL" id="AK291257">
    <property type="protein sequence ID" value="BAF83946.1"/>
    <property type="molecule type" value="mRNA"/>
</dbReference>
<dbReference type="EMBL" id="BC047318">
    <property type="protein sequence ID" value="AAH47318.1"/>
    <property type="molecule type" value="mRNA"/>
</dbReference>
<dbReference type="CCDS" id="CCDS11770.1"/>
<dbReference type="RefSeq" id="NP_000190.1">
    <property type="nucleotide sequence ID" value="NM_000199.5"/>
</dbReference>
<dbReference type="PDB" id="4MHX">
    <property type="method" value="X-ray"/>
    <property type="resolution" value="2.00 A"/>
    <property type="chains" value="A/B=1-502"/>
</dbReference>
<dbReference type="PDB" id="4MIV">
    <property type="method" value="X-ray"/>
    <property type="resolution" value="2.40 A"/>
    <property type="chains" value="A/B/C/D/E/F/G/H=1-502"/>
</dbReference>
<dbReference type="PDBsum" id="4MHX"/>
<dbReference type="PDBsum" id="4MIV"/>
<dbReference type="SMR" id="P51688"/>
<dbReference type="BioGRID" id="112346">
    <property type="interactions" value="107"/>
</dbReference>
<dbReference type="FunCoup" id="P51688">
    <property type="interactions" value="311"/>
</dbReference>
<dbReference type="IntAct" id="P51688">
    <property type="interactions" value="30"/>
</dbReference>
<dbReference type="MINT" id="P51688"/>
<dbReference type="STRING" id="9606.ENSP00000314606"/>
<dbReference type="GlyConnect" id="1576">
    <property type="glycosylation" value="1 N-Linked glycan (1 site)"/>
</dbReference>
<dbReference type="GlyCosmos" id="P51688">
    <property type="glycosylation" value="5 sites, 1 glycan"/>
</dbReference>
<dbReference type="GlyGen" id="P51688">
    <property type="glycosylation" value="6 sites, 11 N-linked glycans (4 sites), 1 O-linked glycan (1 site)"/>
</dbReference>
<dbReference type="iPTMnet" id="P51688"/>
<dbReference type="PhosphoSitePlus" id="P51688"/>
<dbReference type="BioMuta" id="SGSH"/>
<dbReference type="jPOST" id="P51688"/>
<dbReference type="MassIVE" id="P51688"/>
<dbReference type="PaxDb" id="9606-ENSP00000314606"/>
<dbReference type="PeptideAtlas" id="P51688"/>
<dbReference type="ProteomicsDB" id="56373"/>
<dbReference type="Pumba" id="P51688"/>
<dbReference type="Antibodypedia" id="19766">
    <property type="antibodies" value="231 antibodies from 32 providers"/>
</dbReference>
<dbReference type="DNASU" id="6448"/>
<dbReference type="Ensembl" id="ENST00000326317.11">
    <property type="protein sequence ID" value="ENSP00000314606.6"/>
    <property type="gene ID" value="ENSG00000181523.13"/>
</dbReference>
<dbReference type="GeneID" id="6448"/>
<dbReference type="KEGG" id="hsa:6448"/>
<dbReference type="MANE-Select" id="ENST00000326317.11">
    <property type="protein sequence ID" value="ENSP00000314606.6"/>
    <property type="RefSeq nucleotide sequence ID" value="NM_000199.5"/>
    <property type="RefSeq protein sequence ID" value="NP_000190.1"/>
</dbReference>
<dbReference type="UCSC" id="uc002jxz.5">
    <property type="organism name" value="human"/>
</dbReference>
<dbReference type="AGR" id="HGNC:10818"/>
<dbReference type="CTD" id="6448"/>
<dbReference type="DisGeNET" id="6448"/>
<dbReference type="GeneCards" id="SGSH"/>
<dbReference type="GeneReviews" id="SGSH"/>
<dbReference type="HGNC" id="HGNC:10818">
    <property type="gene designation" value="SGSH"/>
</dbReference>
<dbReference type="HPA" id="ENSG00000181523">
    <property type="expression patterns" value="Low tissue specificity"/>
</dbReference>
<dbReference type="MalaCards" id="SGSH"/>
<dbReference type="MIM" id="252900">
    <property type="type" value="phenotype"/>
</dbReference>
<dbReference type="MIM" id="605270">
    <property type="type" value="gene"/>
</dbReference>
<dbReference type="neXtProt" id="NX_P51688"/>
<dbReference type="OpenTargets" id="ENSG00000181523"/>
<dbReference type="Orphanet" id="79269">
    <property type="disease" value="Sanfilippo syndrome type A"/>
</dbReference>
<dbReference type="PharmGKB" id="PA35726"/>
<dbReference type="VEuPathDB" id="HostDB:ENSG00000181523"/>
<dbReference type="eggNOG" id="KOG3867">
    <property type="taxonomic scope" value="Eukaryota"/>
</dbReference>
<dbReference type="GeneTree" id="ENSGT00390000013080"/>
<dbReference type="HOGENOM" id="CLU_006332_7_1_1"/>
<dbReference type="InParanoid" id="P51688"/>
<dbReference type="OMA" id="MAYPMRM"/>
<dbReference type="OrthoDB" id="10012954at2759"/>
<dbReference type="PAN-GO" id="P51688">
    <property type="GO annotations" value="5 GO annotations based on evolutionary models"/>
</dbReference>
<dbReference type="PhylomeDB" id="P51688"/>
<dbReference type="TreeFam" id="TF323156"/>
<dbReference type="BRENDA" id="3.10.1.1">
    <property type="organism ID" value="2681"/>
</dbReference>
<dbReference type="PathwayCommons" id="P51688"/>
<dbReference type="Reactome" id="R-HSA-2024096">
    <property type="pathway name" value="HS-GAG degradation"/>
</dbReference>
<dbReference type="Reactome" id="R-HSA-2206307">
    <property type="pathway name" value="MPS IIIA - Sanfilippo syndrome A"/>
</dbReference>
<dbReference type="SignaLink" id="P51688"/>
<dbReference type="SIGNOR" id="P51688"/>
<dbReference type="BioGRID-ORCS" id="6448">
    <property type="hits" value="14 hits in 1158 CRISPR screens"/>
</dbReference>
<dbReference type="EvolutionaryTrace" id="P51688"/>
<dbReference type="GeneWiki" id="SGSH"/>
<dbReference type="GenomeRNAi" id="6448"/>
<dbReference type="Pharos" id="P51688">
    <property type="development level" value="Tbio"/>
</dbReference>
<dbReference type="PRO" id="PR:P51688"/>
<dbReference type="Proteomes" id="UP000005640">
    <property type="component" value="Chromosome 17"/>
</dbReference>
<dbReference type="RNAct" id="P51688">
    <property type="molecule type" value="protein"/>
</dbReference>
<dbReference type="Bgee" id="ENSG00000181523">
    <property type="expression patterns" value="Expressed in left adrenal gland and 184 other cell types or tissues"/>
</dbReference>
<dbReference type="ExpressionAtlas" id="P51688">
    <property type="expression patterns" value="baseline and differential"/>
</dbReference>
<dbReference type="GO" id="GO:0070062">
    <property type="term" value="C:extracellular exosome"/>
    <property type="evidence" value="ECO:0007005"/>
    <property type="project" value="UniProtKB"/>
</dbReference>
<dbReference type="GO" id="GO:0043202">
    <property type="term" value="C:lysosomal lumen"/>
    <property type="evidence" value="ECO:0000304"/>
    <property type="project" value="Reactome"/>
</dbReference>
<dbReference type="GO" id="GO:0005764">
    <property type="term" value="C:lysosome"/>
    <property type="evidence" value="ECO:0000314"/>
    <property type="project" value="UniProtKB"/>
</dbReference>
<dbReference type="GO" id="GO:0046872">
    <property type="term" value="F:metal ion binding"/>
    <property type="evidence" value="ECO:0007669"/>
    <property type="project" value="UniProtKB-KW"/>
</dbReference>
<dbReference type="GO" id="GO:0016250">
    <property type="term" value="F:N-sulfoglucosamine sulfohydrolase activity"/>
    <property type="evidence" value="ECO:0000314"/>
    <property type="project" value="UniProtKB"/>
</dbReference>
<dbReference type="GO" id="GO:0008484">
    <property type="term" value="F:sulfuric ester hydrolase activity"/>
    <property type="evidence" value="ECO:0007669"/>
    <property type="project" value="Ensembl"/>
</dbReference>
<dbReference type="GO" id="GO:0008340">
    <property type="term" value="P:determination of adult lifespan"/>
    <property type="evidence" value="ECO:0007669"/>
    <property type="project" value="Ensembl"/>
</dbReference>
<dbReference type="GO" id="GO:0006027">
    <property type="term" value="P:glycosaminoglycan catabolic process"/>
    <property type="evidence" value="ECO:0000314"/>
    <property type="project" value="UniProtKB"/>
</dbReference>
<dbReference type="GO" id="GO:0030200">
    <property type="term" value="P:heparan sulfate proteoglycan catabolic process"/>
    <property type="evidence" value="ECO:0000315"/>
    <property type="project" value="UniProtKB"/>
</dbReference>
<dbReference type="GO" id="GO:0061744">
    <property type="term" value="P:motor behavior"/>
    <property type="evidence" value="ECO:0007669"/>
    <property type="project" value="Ensembl"/>
</dbReference>
<dbReference type="CDD" id="cd16027">
    <property type="entry name" value="SGSH"/>
    <property type="match status" value="1"/>
</dbReference>
<dbReference type="FunFam" id="3.40.720.10:FF:000026">
    <property type="entry name" value="N-sulphoglucosamine sulphohydrolase"/>
    <property type="match status" value="1"/>
</dbReference>
<dbReference type="Gene3D" id="3.40.720.10">
    <property type="entry name" value="Alkaline Phosphatase, subunit A"/>
    <property type="match status" value="1"/>
</dbReference>
<dbReference type="InterPro" id="IPR017850">
    <property type="entry name" value="Alkaline_phosphatase_core_sf"/>
</dbReference>
<dbReference type="InterPro" id="IPR032506">
    <property type="entry name" value="SGSH_C"/>
</dbReference>
<dbReference type="InterPro" id="IPR024607">
    <property type="entry name" value="Sulfatase_CS"/>
</dbReference>
<dbReference type="InterPro" id="IPR000917">
    <property type="entry name" value="Sulfatase_N"/>
</dbReference>
<dbReference type="PANTHER" id="PTHR43108">
    <property type="entry name" value="N-ACETYLGLUCOSAMINE-6-SULFATASE FAMILY MEMBER"/>
    <property type="match status" value="1"/>
</dbReference>
<dbReference type="PANTHER" id="PTHR43108:SF6">
    <property type="entry name" value="N-SULPHOGLUCOSAMINE SULPHOHYDROLASE"/>
    <property type="match status" value="1"/>
</dbReference>
<dbReference type="Pfam" id="PF16347">
    <property type="entry name" value="SGSH_C"/>
    <property type="match status" value="1"/>
</dbReference>
<dbReference type="Pfam" id="PF00884">
    <property type="entry name" value="Sulfatase"/>
    <property type="match status" value="1"/>
</dbReference>
<dbReference type="SUPFAM" id="SSF53649">
    <property type="entry name" value="Alkaline phosphatase-like"/>
    <property type="match status" value="1"/>
</dbReference>
<dbReference type="PROSITE" id="PS00523">
    <property type="entry name" value="SULFATASE_1"/>
    <property type="match status" value="1"/>
</dbReference>
<dbReference type="PROSITE" id="PS00149">
    <property type="entry name" value="SULFATASE_2"/>
    <property type="match status" value="1"/>
</dbReference>
<reference key="1">
    <citation type="journal article" date="1995" name="Nat. Genet.">
        <title>Cloning of the sulphamidase gene and identification of mutations in Sanfilippo A syndrome.</title>
        <authorList>
            <person name="Scott H.S."/>
            <person name="Blanch L."/>
            <person name="Guo X.-H."/>
            <person name="Freeman C."/>
            <person name="Orsborn A."/>
            <person name="Baker E."/>
            <person name="Sutherland G.R."/>
            <person name="Morris C.P."/>
            <person name="Hopwood J.J."/>
        </authorList>
    </citation>
    <scope>NUCLEOTIDE SEQUENCE [MRNA]</scope>
    <scope>PROTEIN SEQUENCE OF 21-45</scope>
    <scope>CATALYTIC ACTIVITY</scope>
    <scope>FUNCTION</scope>
    <source>
        <tissue>Kidney</tissue>
        <tissue>Testis</tissue>
    </source>
</reference>
<reference key="2">
    <citation type="submission" date="1996-11" db="EMBL/GenBank/DDBJ databases">
        <authorList>
            <person name="Karageorgos L.E."/>
            <person name="Guo X.H."/>
            <person name="Blanch L."/>
            <person name="Weber B."/>
            <person name="Anson D.S."/>
            <person name="Scott H.S."/>
            <person name="Hopwood J.J."/>
        </authorList>
    </citation>
    <scope>NUCLEOTIDE SEQUENCE [GENOMIC DNA]</scope>
</reference>
<reference key="3">
    <citation type="journal article" date="2004" name="Nat. Genet.">
        <title>Complete sequencing and characterization of 21,243 full-length human cDNAs.</title>
        <authorList>
            <person name="Ota T."/>
            <person name="Suzuki Y."/>
            <person name="Nishikawa T."/>
            <person name="Otsuki T."/>
            <person name="Sugiyama T."/>
            <person name="Irie R."/>
            <person name="Wakamatsu A."/>
            <person name="Hayashi K."/>
            <person name="Sato H."/>
            <person name="Nagai K."/>
            <person name="Kimura K."/>
            <person name="Makita H."/>
            <person name="Sekine M."/>
            <person name="Obayashi M."/>
            <person name="Nishi T."/>
            <person name="Shibahara T."/>
            <person name="Tanaka T."/>
            <person name="Ishii S."/>
            <person name="Yamamoto J."/>
            <person name="Saito K."/>
            <person name="Kawai Y."/>
            <person name="Isono Y."/>
            <person name="Nakamura Y."/>
            <person name="Nagahari K."/>
            <person name="Murakami K."/>
            <person name="Yasuda T."/>
            <person name="Iwayanagi T."/>
            <person name="Wagatsuma M."/>
            <person name="Shiratori A."/>
            <person name="Sudo H."/>
            <person name="Hosoiri T."/>
            <person name="Kaku Y."/>
            <person name="Kodaira H."/>
            <person name="Kondo H."/>
            <person name="Sugawara M."/>
            <person name="Takahashi M."/>
            <person name="Kanda K."/>
            <person name="Yokoi T."/>
            <person name="Furuya T."/>
            <person name="Kikkawa E."/>
            <person name="Omura Y."/>
            <person name="Abe K."/>
            <person name="Kamihara K."/>
            <person name="Katsuta N."/>
            <person name="Sato K."/>
            <person name="Tanikawa M."/>
            <person name="Yamazaki M."/>
            <person name="Ninomiya K."/>
            <person name="Ishibashi T."/>
            <person name="Yamashita H."/>
            <person name="Murakawa K."/>
            <person name="Fujimori K."/>
            <person name="Tanai H."/>
            <person name="Kimata M."/>
            <person name="Watanabe M."/>
            <person name="Hiraoka S."/>
            <person name="Chiba Y."/>
            <person name="Ishida S."/>
            <person name="Ono Y."/>
            <person name="Takiguchi S."/>
            <person name="Watanabe S."/>
            <person name="Yosida M."/>
            <person name="Hotuta T."/>
            <person name="Kusano J."/>
            <person name="Kanehori K."/>
            <person name="Takahashi-Fujii A."/>
            <person name="Hara H."/>
            <person name="Tanase T.-O."/>
            <person name="Nomura Y."/>
            <person name="Togiya S."/>
            <person name="Komai F."/>
            <person name="Hara R."/>
            <person name="Takeuchi K."/>
            <person name="Arita M."/>
            <person name="Imose N."/>
            <person name="Musashino K."/>
            <person name="Yuuki H."/>
            <person name="Oshima A."/>
            <person name="Sasaki N."/>
            <person name="Aotsuka S."/>
            <person name="Yoshikawa Y."/>
            <person name="Matsunawa H."/>
            <person name="Ichihara T."/>
            <person name="Shiohata N."/>
            <person name="Sano S."/>
            <person name="Moriya S."/>
            <person name="Momiyama H."/>
            <person name="Satoh N."/>
            <person name="Takami S."/>
            <person name="Terashima Y."/>
            <person name="Suzuki O."/>
            <person name="Nakagawa S."/>
            <person name="Senoh A."/>
            <person name="Mizoguchi H."/>
            <person name="Goto Y."/>
            <person name="Shimizu F."/>
            <person name="Wakebe H."/>
            <person name="Hishigaki H."/>
            <person name="Watanabe T."/>
            <person name="Sugiyama A."/>
            <person name="Takemoto M."/>
            <person name="Kawakami B."/>
            <person name="Yamazaki M."/>
            <person name="Watanabe K."/>
            <person name="Kumagai A."/>
            <person name="Itakura S."/>
            <person name="Fukuzumi Y."/>
            <person name="Fujimori Y."/>
            <person name="Komiyama M."/>
            <person name="Tashiro H."/>
            <person name="Tanigami A."/>
            <person name="Fujiwara T."/>
            <person name="Ono T."/>
            <person name="Yamada K."/>
            <person name="Fujii Y."/>
            <person name="Ozaki K."/>
            <person name="Hirao M."/>
            <person name="Ohmori Y."/>
            <person name="Kawabata A."/>
            <person name="Hikiji T."/>
            <person name="Kobatake N."/>
            <person name="Inagaki H."/>
            <person name="Ikema Y."/>
            <person name="Okamoto S."/>
            <person name="Okitani R."/>
            <person name="Kawakami T."/>
            <person name="Noguchi S."/>
            <person name="Itoh T."/>
            <person name="Shigeta K."/>
            <person name="Senba T."/>
            <person name="Matsumura K."/>
            <person name="Nakajima Y."/>
            <person name="Mizuno T."/>
            <person name="Morinaga M."/>
            <person name="Sasaki M."/>
            <person name="Togashi T."/>
            <person name="Oyama M."/>
            <person name="Hata H."/>
            <person name="Watanabe M."/>
            <person name="Komatsu T."/>
            <person name="Mizushima-Sugano J."/>
            <person name="Satoh T."/>
            <person name="Shirai Y."/>
            <person name="Takahashi Y."/>
            <person name="Nakagawa K."/>
            <person name="Okumura K."/>
            <person name="Nagase T."/>
            <person name="Nomura N."/>
            <person name="Kikuchi H."/>
            <person name="Masuho Y."/>
            <person name="Yamashita R."/>
            <person name="Nakai K."/>
            <person name="Yada T."/>
            <person name="Nakamura Y."/>
            <person name="Ohara O."/>
            <person name="Isogai T."/>
            <person name="Sugano S."/>
        </authorList>
    </citation>
    <scope>NUCLEOTIDE SEQUENCE [LARGE SCALE MRNA]</scope>
</reference>
<reference key="4">
    <citation type="journal article" date="2004" name="Genome Res.">
        <title>The status, quality, and expansion of the NIH full-length cDNA project: the Mammalian Gene Collection (MGC).</title>
        <authorList>
            <consortium name="The MGC Project Team"/>
        </authorList>
    </citation>
    <scope>NUCLEOTIDE SEQUENCE [LARGE SCALE MRNA]</scope>
    <source>
        <tissue>Pancreas</tissue>
    </source>
</reference>
<reference key="5">
    <citation type="journal article" date="2003" name="Nat. Biotechnol.">
        <title>Identification and quantification of N-linked glycoproteins using hydrazide chemistry, stable isotope labeling and mass spectrometry.</title>
        <authorList>
            <person name="Zhang H."/>
            <person name="Li X.-J."/>
            <person name="Martin D.B."/>
            <person name="Aebersold R."/>
        </authorList>
    </citation>
    <scope>GLYCOSYLATION AT ASN-41 AND ASN-264</scope>
</reference>
<reference key="6">
    <citation type="journal article" date="2009" name="J. Proteome Res.">
        <title>Glycoproteomics analysis of human liver tissue by combination of multiple enzyme digestion and hydrazide chemistry.</title>
        <authorList>
            <person name="Chen R."/>
            <person name="Jiang X."/>
            <person name="Sun D."/>
            <person name="Han G."/>
            <person name="Wang F."/>
            <person name="Ye M."/>
            <person name="Wang L."/>
            <person name="Zou H."/>
        </authorList>
    </citation>
    <scope>GLYCOSYLATION [LARGE SCALE ANALYSIS] AT ASN-41 AND ASN-413</scope>
    <source>
        <tissue>Liver</tissue>
    </source>
</reference>
<reference key="7">
    <citation type="journal article" date="2014" name="J. Proteomics">
        <title>An enzyme assisted RP-RPLC approach for in-depth analysis of human liver phosphoproteome.</title>
        <authorList>
            <person name="Bian Y."/>
            <person name="Song C."/>
            <person name="Cheng K."/>
            <person name="Dong M."/>
            <person name="Wang F."/>
            <person name="Huang J."/>
            <person name="Sun D."/>
            <person name="Wang L."/>
            <person name="Ye M."/>
            <person name="Zou H."/>
        </authorList>
    </citation>
    <scope>IDENTIFICATION BY MASS SPECTROMETRY [LARGE SCALE ANALYSIS]</scope>
    <source>
        <tissue>Liver</tissue>
    </source>
</reference>
<reference key="8">
    <citation type="journal article" date="2014" name="Acta Crystallogr. D">
        <title>Structure of sulfamidase provides insight into the molecular pathology of mucopolysaccharidosis IIIA.</title>
        <authorList>
            <person name="Sidhu N.S."/>
            <person name="Schreiber K."/>
            <person name="Propper K."/>
            <person name="Becker S."/>
            <person name="Uson I."/>
            <person name="Sheldrick G.M."/>
            <person name="Gartner J."/>
            <person name="Kratzner R."/>
            <person name="Steinfeld R."/>
        </authorList>
    </citation>
    <scope>X-RAY CRYSTALLOGRAPHY (2.00 ANGSTROMS) IN COMPLEX WITH CALCIUM</scope>
    <scope>FUNCTION</scope>
    <scope>CATALYTIC ACTIVITY</scope>
    <scope>ACTIVE SITE</scope>
    <scope>GLYCOSYLATION AT ASN-41; ASN-151; ASN-264 AND ASN-413</scope>
    <scope>OXOALANINE AT CYS-70</scope>
    <scope>DISULFIDE BONDS</scope>
</reference>
<reference key="9">
    <citation type="journal article" date="1997" name="Hum. Mol. Genet.">
        <title>Molecular defects in Sanfilippo syndrome type A.</title>
        <authorList>
            <person name="Blanch L."/>
            <person name="Weber B."/>
            <person name="Guo X.-H."/>
            <person name="Scott H.S."/>
            <person name="Hopwood J.J."/>
        </authorList>
    </citation>
    <scope>VARIANT MPS3A LYS-447</scope>
    <scope>VARIANT HIS-456</scope>
</reference>
<reference key="10">
    <citation type="journal article" date="1997" name="Hum. Mol. Genet.">
        <title>Novel mutations in Sanfilippo A syndrome: implications for enzyme function.</title>
        <authorList>
            <person name="Weber B."/>
            <person name="Guo X.-H."/>
            <person name="Wraith J.E."/>
            <person name="Cooper A."/>
            <person name="Kleijer W.J."/>
            <person name="Bunge S."/>
            <person name="Hopwood J.J."/>
        </authorList>
    </citation>
    <scope>VARIANTS MPS3A MET-131; MET-139; GLY-234; HIS-377 AND ARG-380</scope>
</reference>
<reference key="11">
    <citation type="journal article" date="1997" name="Hum. Mutat.">
        <title>Identification of 16 sulfamidase gene mutations including the common R74C in patients with mucopolysaccharidosis type IIIA (Sanfilippo A).</title>
        <authorList>
            <person name="Bunge S."/>
            <person name="Ince H."/>
            <person name="Steglich C."/>
            <person name="Kleijer W.J."/>
            <person name="Beck M."/>
            <person name="Zaremba J."/>
            <person name="van Diggelen O.P."/>
            <person name="Weber B."/>
            <person name="Hopwood J.J."/>
            <person name="Gal A."/>
        </authorList>
    </citation>
    <scope>VARIANTS MPS3A HIS-74; ARG-90; LEU-193; VAL-235; ALA-321; ARG-364 AND LYS-389</scope>
</reference>
<reference key="12">
    <citation type="journal article" date="1998" name="Hum. Mutat.">
        <title>Identification of molecular defects in Italian Sanfilippo A patients including 13 novel mutations.</title>
        <authorList>
            <person name="di Natale P."/>
            <person name="Balzano N."/>
            <person name="Esposito S."/>
            <person name="Villani G.R.D."/>
        </authorList>
    </citation>
    <scope>VARIANTS MPS3A ASN-40; THR-44; TRP-66; CYS-74; ARG-122; LEU-128; PRO-146; GLN-150; ASN-179; CYS-182; ARG-227; LYS-369 AND CYS-377</scope>
    <scope>VARIANTS ALA-226 AND HIS-456</scope>
</reference>
<reference key="13">
    <citation type="journal article" date="1998" name="Hum. Mutat.">
        <title>Mutation 1091delC is highly prevalent in Spanish Sanfilippo syndrome type A patients.</title>
        <authorList>
            <person name="Montfort M."/>
            <person name="Vilageliu L."/>
            <person name="Garcia-Giralt N."/>
            <person name="Guidi S."/>
            <person name="Coll M.J."/>
            <person name="Chabas A."/>
            <person name="Grinberg D."/>
        </authorList>
    </citation>
    <scope>VARIANTS MPS3A ARG-85; PRO-206; PRO-354 AND ARG-386</scope>
</reference>
<reference key="14">
    <citation type="journal article" date="2000" name="J. Med. Genet.">
        <title>Mutational analysis of Sanfilippo syndrome type A (MPS IIIA): identification of 13 novel mutations.</title>
        <authorList>
            <person name="Beesley C.E."/>
            <person name="Young E.P."/>
            <person name="Vellodi A."/>
            <person name="Winchester B.G."/>
        </authorList>
    </citation>
    <scope>VARIANTS MPS3A GLY-32; TRP-66; CYS-74; PRO-79; TYR-84; ARG-122; TRP-150; ASN-235; HIS-245; ASN-273; PRO-298; SER-322; LYS-355; HIS-374; GLN-ARG-381 INS; TRP-433; 436-TRP--LEU-438 DEL AND PHE-486</scope>
    <scope>VARIANT HIS-456</scope>
</reference>
<reference key="15">
    <citation type="journal article" date="2002" name="Clin. Genet.">
        <title>Identification and characterization of mutations underlying Sanfilippo syndrome type A (mucopolysaccharidosis type IIIA).</title>
        <authorList>
            <person name="Lee-Chen G.J."/>
            <person name="Lin S.P."/>
            <person name="Ko M.H."/>
            <person name="Chuang C.K."/>
            <person name="Chen C.P."/>
            <person name="Lee H.H."/>
            <person name="Cheng S.C."/>
            <person name="Shen C.H."/>
            <person name="Tseng K.L."/>
            <person name="Li C.L."/>
        </authorList>
    </citation>
    <scope>VARIANTS MPS3A LYS-42; ASN-235; SER-293 AND CYS-377</scope>
    <scope>VARIANT HIS-456</scope>
    <scope>CHARACTERIZATION OF VARIANTS MPS3A LYS-42; ASN-235; SER-293 AND CYS-377</scope>
    <scope>CHARACTERIZATION OF VARIANT HIS-456</scope>
</reference>
<reference key="16">
    <citation type="journal article" date="2002" name="Hum. Mutat.">
        <title>Sanfilippo syndrome in Turkey: identification of novel mutations in subtypes A and B.</title>
        <authorList>
            <person name="Emre S."/>
            <person name="Terzioglu M."/>
            <person name="Tokatli A."/>
            <person name="Coskun T."/>
            <person name="Ozalp I."/>
            <person name="Weber B."/>
            <person name="Hopwood J.J."/>
        </authorList>
    </citation>
    <scope>VARIANTS MPS3A CYS-74 AND SER-288</scope>
</reference>
<reference key="17">
    <citation type="journal article" date="2003" name="Clin. Genet.">
        <title>Analysis of Sanfilippo A gene mutations in a large pedigree.</title>
        <authorList>
            <person name="Di Natale P."/>
            <person name="Villani G.R.D."/>
            <person name="Di Domenico C."/>
            <person name="Daniele A."/>
            <person name="Dionisi Vici C."/>
            <person name="Bartuli A."/>
        </authorList>
    </citation>
    <scope>VARIANTS MPS3A LEU-128; LYS-369 AND GLN-433</scope>
    <scope>VARIANT HIS-456</scope>
</reference>
<reference key="18">
    <citation type="journal article" date="2004" name="Hum. Mutat.">
        <title>Transport, enzymatic activity, and stability of mutant sulfamidase (SGSH) identified in patients with mucopolysaccharidosis type III A.</title>
        <authorList>
            <person name="Muschol N."/>
            <person name="Storch S."/>
            <person name="Ballhausen D."/>
            <person name="Beesley C."/>
            <person name="Westermann J.-C."/>
            <person name="Gal A."/>
            <person name="Ullrich K."/>
            <person name="Hopwood J.J."/>
            <person name="Winchester B."/>
            <person name="Braulke T."/>
        </authorList>
    </citation>
    <scope>VARIANTS MPS3A CYS-74; ARG-106; PRO-163; ARG-191; TYR-403 DEL AND TRP-433</scope>
    <scope>CHARACTERIZATION OF VARIANTS MPS3A CYS-74; ARG-106; PRO-163; ARG-191; TYR-403 DEL AND TRP-433</scope>
    <scope>CATALYTIC ACTIVITY</scope>
    <scope>FUNCTION</scope>
    <scope>SUBCELLULAR LOCATION</scope>
</reference>
<reference key="19">
    <citation type="journal article" date="2005" name="Am. J. Med. Genet. A">
        <title>An adult Sanfilippo type A patient with homozygous mutation R206P in the sulfamidase gene.</title>
        <authorList>
            <person name="Gabrielli O."/>
            <person name="Coppa G.V."/>
            <person name="Bruni S."/>
            <person name="Villani G.R.D."/>
            <person name="Pontarelli G."/>
            <person name="Di Natale P."/>
        </authorList>
    </citation>
    <scope>VARIANT MPS3A PRO-206</scope>
    <scope>VARIANT HIS-456</scope>
    <scope>CHARACTERIZATION OF VARIANT MPS3A PRO-206</scope>
</reference>
<reference key="20">
    <citation type="journal article" date="2005" name="J. Inherit. Metab. Dis.">
        <title>Early diagnosis of mucopolysaccharidosis III A with a nonsense mutation and two de novo missense mutations in SGSH gene.</title>
        <authorList>
            <person name="Bekri S."/>
            <person name="Armana G."/>
            <person name="De Ricaud D."/>
            <person name="Osenda M."/>
            <person name="Maire I."/>
            <person name="Van Obberghen E."/>
            <person name="Froissart R."/>
        </authorList>
    </citation>
    <scope>VARIANTS MPS3A VAL-300 AND PRO-307</scope>
</reference>
<reference key="21">
    <citation type="journal article" date="2006" name="Hum. Genet.">
        <title>Gene symbol: SGSH. Disease: Sanfilippo type A syndrome, mucopolysaccharidosis IIIA.</title>
        <authorList>
            <person name="Di Natale P."/>
            <person name="Pontarelli G."/>
            <person name="Villani G.R.D."/>
            <person name="Di Domenico C."/>
        </authorList>
    </citation>
    <scope>VARIANT MPS3A THR-293</scope>
    <scope>VARIANTS LEU-304 AND MET-387</scope>
</reference>
<reference key="22">
    <citation type="journal article" date="2006" name="Hum. Reprod.">
        <title>Strategies and clinical outcome of 250 cycles of Preimplantation Genetic Diagnosis for single gene disorders.</title>
        <authorList>
            <person name="Fiorentino F."/>
            <person name="Biricik A."/>
            <person name="Nuccitelli A."/>
            <person name="De Palma R."/>
            <person name="Kahraman S."/>
            <person name="Iacobelli M."/>
            <person name="Trengia V."/>
            <person name="Caserta D."/>
            <person name="Bonu M.A."/>
            <person name="Borini A."/>
            <person name="Baldi M."/>
        </authorList>
    </citation>
    <scope>VARIANT MPS3A THR-88</scope>
</reference>
<reference key="23">
    <citation type="journal article" date="2008" name="Hum. Mutat.">
        <title>The mutation p.Ser298Pro in the sulphamidase gene (SGSH) is associated with a slowly progressive clinical phenotype in mucopolysaccharidosis type IIIA (Sanfilippo A syndrome).</title>
        <authorList>
            <person name="Meyer A."/>
            <person name="Kossow K."/>
            <person name="Gal A."/>
            <person name="Steglich C."/>
            <person name="Muehlhausen C."/>
            <person name="Ullrich K."/>
            <person name="Braulke T."/>
            <person name="Muschol N."/>
        </authorList>
    </citation>
    <scope>VARIANTS MPS3A GLU-32; CYS-74; HIS-245; ALA-251 AND PRO-298</scope>
    <scope>ASSOCIATION OF VARIANT MPS3A PRO-298 WITH SLOWLY PROGRESSIVE PHENOTYPE</scope>
</reference>
<reference key="24">
    <citation type="journal article" date="2011" name="Am. J. Med. Genet. A">
        <title>Residual activity and proteasomal degradation of p.Ser298Pro sulfamidase identified in patients with a mild clinical phenotype of Sanfilippo A syndrome.</title>
        <authorList>
            <person name="Muschol N."/>
            <person name="Pohl S."/>
            <person name="Meyer A."/>
            <person name="Gal A."/>
            <person name="Ullrich K."/>
            <person name="Braulke T."/>
        </authorList>
    </citation>
    <scope>VARIANTS MPS3A TRP-66; CYS-74; HIS-245; ALA-251 AND PRO-298</scope>
    <scope>CHARACTERIZATION OF VARIANT MPS3A PRO-298</scope>
</reference>
<reference key="25">
    <citation type="journal article" date="2017" name="World J. Pediatr.">
        <title>Update of the spectrum of mucopolysaccharidoses type III in Tunisia: identification of three novel mutations and in silico structural analysis of the missense mutations.</title>
        <authorList>
            <person name="Ouesleti S."/>
            <person name="Coutinho M.F."/>
            <person name="Ribeiro I."/>
            <person name="Miled A."/>
            <person name="Mosbahi D.S."/>
            <person name="Alves S."/>
        </authorList>
    </citation>
    <scope>VARIANTS MPS3A 365-GLN--LEU-502 DEL AND ASN-477</scope>
</reference>
<comment type="function">
    <text evidence="7 15 17">Catalyzes a step in lysosomal heparan sulfate degradation.</text>
</comment>
<comment type="catalytic activity">
    <reaction evidence="7 15 17">
        <text>N-sulfo-D-glucosamine + H2O = D-glucosamine + sulfate</text>
        <dbReference type="Rhea" id="RHEA:17881"/>
        <dbReference type="ChEBI" id="CHEBI:15377"/>
        <dbReference type="ChEBI" id="CHEBI:16189"/>
        <dbReference type="ChEBI" id="CHEBI:57868"/>
        <dbReference type="ChEBI" id="CHEBI:58723"/>
        <dbReference type="EC" id="3.10.1.1"/>
    </reaction>
</comment>
<comment type="cofactor">
    <cofactor evidence="15">
        <name>Ca(2+)</name>
        <dbReference type="ChEBI" id="CHEBI:29108"/>
    </cofactor>
    <text evidence="15">Binds 1 Ca(2+) ion per subunit.</text>
</comment>
<comment type="interaction">
    <interactant intactId="EBI-2907521">
        <id>P51688</id>
    </interactant>
    <interactant intactId="EBI-2853497">
        <id>Q8NBK3</id>
        <label>SUMF1</label>
    </interactant>
    <organismsDiffer>false</organismsDiffer>
    <experiments>3</experiments>
</comment>
<comment type="subcellular location">
    <subcellularLocation>
        <location evidence="7">Lysosome</location>
    </subcellularLocation>
</comment>
<comment type="PTM">
    <text evidence="15">The conversion to 3-oxoalanine (also known as C-formylglycine, FGly), of a serine or cysteine residue in prokaryotes and of a cysteine residue in eukaryotes, is critical for catalytic activity.</text>
</comment>
<comment type="disease" evidence="2 3 4 5 7 8 9 10 11 12 14 16 18 19 20 21 22">
    <disease id="DI-00774">
        <name>Mucopolysaccharidosis 3A</name>
        <acronym>MPS3A</acronym>
        <description>A severe form of mucopolysaccharidosis type 3, an autosomal recessive lysosomal storage disease due to impaired degradation of heparan sulfate. MPS3 is characterized by severe central nervous system degeneration, but only mild somatic disease. Onset of clinical features usually occurs between 2 and 6 years; severe neurologic degeneration occurs in most patients between 6 and 10 years of age, and death occurs typically during the second or third decade of life. MPS3A is characterized by earlier onset, rapid progression of symptoms and shorter survival.</description>
        <dbReference type="MIM" id="252900"/>
    </disease>
    <text>The disease is caused by variants affecting the gene represented in this entry.</text>
</comment>
<comment type="similarity">
    <text evidence="23">Belongs to the sulfatase family.</text>
</comment>
<proteinExistence type="evidence at protein level"/>
<accession>P51688</accession>
<accession>A8K5E2</accession>
<gene>
    <name type="primary">SGSH</name>
    <name type="synonym">HSS</name>
</gene>
<evidence type="ECO:0000255" key="1"/>
<evidence type="ECO:0000269" key="2">
    <source>
    </source>
</evidence>
<evidence type="ECO:0000269" key="3">
    <source>
    </source>
</evidence>
<evidence type="ECO:0000269" key="4">
    <source>
    </source>
</evidence>
<evidence type="ECO:0000269" key="5">
    <source>
    </source>
</evidence>
<evidence type="ECO:0000269" key="6">
    <source>
    </source>
</evidence>
<evidence type="ECO:0000269" key="7">
    <source>
    </source>
</evidence>
<evidence type="ECO:0000269" key="8">
    <source>
    </source>
</evidence>
<evidence type="ECO:0000269" key="9">
    <source>
    </source>
</evidence>
<evidence type="ECO:0000269" key="10">
    <source>
    </source>
</evidence>
<evidence type="ECO:0000269" key="11">
    <source>
    </source>
</evidence>
<evidence type="ECO:0000269" key="12">
    <source>
    </source>
</evidence>
<evidence type="ECO:0000269" key="13">
    <source>
    </source>
</evidence>
<evidence type="ECO:0000269" key="14">
    <source>
    </source>
</evidence>
<evidence type="ECO:0000269" key="15">
    <source>
    </source>
</evidence>
<evidence type="ECO:0000269" key="16">
    <source>
    </source>
</evidence>
<evidence type="ECO:0000269" key="17">
    <source>
    </source>
</evidence>
<evidence type="ECO:0000269" key="18">
    <source>
    </source>
</evidence>
<evidence type="ECO:0000269" key="19">
    <source>
    </source>
</evidence>
<evidence type="ECO:0000269" key="20">
    <source>
    </source>
</evidence>
<evidence type="ECO:0000269" key="21">
    <source>
    </source>
</evidence>
<evidence type="ECO:0000269" key="22">
    <source>
    </source>
</evidence>
<evidence type="ECO:0000305" key="23"/>
<evidence type="ECO:0007744" key="24">
    <source>
        <dbReference type="PDB" id="4MHX"/>
    </source>
</evidence>
<evidence type="ECO:0007744" key="25">
    <source>
        <dbReference type="PDB" id="4MIV"/>
    </source>
</evidence>
<evidence type="ECO:0007829" key="26">
    <source>
        <dbReference type="PDB" id="4MHX"/>
    </source>
</evidence>
<name>SPHM_HUMAN</name>
<protein>
    <recommendedName>
        <fullName>N-sulphoglucosamine sulphohydrolase</fullName>
        <ecNumber evidence="7 15 17">3.10.1.1</ecNumber>
    </recommendedName>
    <alternativeName>
        <fullName>Sulfoglucosamine sulfamidase</fullName>
    </alternativeName>
    <alternativeName>
        <fullName>Sulphamidase</fullName>
    </alternativeName>
</protein>
<sequence length="502" mass="56695">MSCPVPACCALLLVLGLCRARPRNALLLLADDGGFESGAYNNSAIATPHLDALARRSLLFRNAFTSVSSCSPSRASLLTGLPQHQNGMYGLHQDVHHFNSFDKVRSLPLLLSQAGVRTGIIGKKHVGPETVYPFDFAYTEENGSVLQVGRNITRIKLLVRKFLQTQDDRPFFLYVAFHDPHRCGHSQPQYGTFCEKFGNGESGMGRIPDWTPQAYDPLDVLVPYFVPNTPAARADLAAQYTTVGRMDQGVGLVLQELRDAGVLNDTLVIFTSDNGIPFPSGRTNLYWPGTAEPLLVSSPEHPKRWGQVSEAYVSLLDLTPTILDWFSIPYPSYAIFGSKTIHLTGRSLLPALEAEPLWATVFGSQSHHEVTMSYPMRSVQHRHFRLVHNLNFKMPFPIDQDFYVSPTFQDLLNRTTAGQPTGWYKDLRHYYYRARWELYDRSRDPHETQNLATDPRFAQLLEMLRDQLAKWQWETHDPWVCAPDGVLEEKLSPQCQPLHNEL</sequence>
<feature type="signal peptide" evidence="17">
    <location>
        <begin position="1"/>
        <end position="20"/>
    </location>
</feature>
<feature type="chain" id="PRO_0000033433" description="N-sulphoglucosamine sulphohydrolase">
    <location>
        <begin position="21"/>
        <end position="502"/>
    </location>
</feature>
<feature type="active site" description="Nucleophile" evidence="15">
    <location>
        <position position="70"/>
    </location>
</feature>
<feature type="binding site" evidence="15 24 25">
    <location>
        <position position="31"/>
    </location>
    <ligand>
        <name>Ca(2+)</name>
        <dbReference type="ChEBI" id="CHEBI:29108"/>
    </ligand>
</feature>
<feature type="binding site" evidence="15 24 25">
    <location>
        <position position="32"/>
    </location>
    <ligand>
        <name>Ca(2+)</name>
        <dbReference type="ChEBI" id="CHEBI:29108"/>
    </ligand>
</feature>
<feature type="binding site" description="via 3-oxoalanine" evidence="15 24 25">
    <location>
        <position position="70"/>
    </location>
    <ligand>
        <name>Ca(2+)</name>
        <dbReference type="ChEBI" id="CHEBI:29108"/>
    </ligand>
</feature>
<feature type="binding site" evidence="15 24 25">
    <location>
        <position position="273"/>
    </location>
    <ligand>
        <name>Ca(2+)</name>
        <dbReference type="ChEBI" id="CHEBI:29108"/>
    </ligand>
</feature>
<feature type="binding site" evidence="15 24 25">
    <location>
        <position position="274"/>
    </location>
    <ligand>
        <name>Ca(2+)</name>
        <dbReference type="ChEBI" id="CHEBI:29108"/>
    </ligand>
</feature>
<feature type="modified residue" description="3-oxoalanine (Cys)" evidence="15">
    <location>
        <position position="70"/>
    </location>
</feature>
<feature type="glycosylation site" description="N-linked (GlcNAc...) asparagine" evidence="6 13 15 24 25">
    <location>
        <position position="41"/>
    </location>
</feature>
<feature type="glycosylation site" description="N-linked (GlcNAc...) asparagine" evidence="1">
    <location>
        <position position="142"/>
    </location>
</feature>
<feature type="glycosylation site" description="N-linked (GlcNAc...) asparagine" evidence="15 24 25">
    <location>
        <position position="151"/>
    </location>
</feature>
<feature type="glycosylation site" description="N-linked (GlcNAc...) asparagine" evidence="6 15 24 25">
    <location>
        <position position="264"/>
    </location>
</feature>
<feature type="glycosylation site" description="N-linked (GlcNAc...) asparagine" evidence="13 15 24 25">
    <location>
        <position position="413"/>
    </location>
</feature>
<feature type="disulfide bond" evidence="15 24 25">
    <location>
        <begin position="183"/>
        <end position="194"/>
    </location>
</feature>
<feature type="disulfide bond" evidence="15 24 25">
    <location>
        <begin position="481"/>
        <end position="495"/>
    </location>
</feature>
<feature type="sequence variant" id="VAR_054670" description="In MPS3A; dbSNP:rs139850991." evidence="12">
    <original>D</original>
    <variation>E</variation>
    <location>
        <position position="32"/>
    </location>
</feature>
<feature type="sequence variant" id="VAR_054671" description="In MPS3A." evidence="2">
    <original>D</original>
    <variation>G</variation>
    <location>
        <position position="32"/>
    </location>
</feature>
<feature type="sequence variant" id="VAR_007388" description="In MPS3A; intermediate; dbSNP:rs1598758001." evidence="21">
    <original>Y</original>
    <variation>N</variation>
    <location>
        <position position="40"/>
    </location>
</feature>
<feature type="sequence variant" id="VAR_054672" description="In MPS3A; does not yield active enzyme; the reduction in 62 kDa precursor and 56 kDa mature forms suggests an increased degradation of the mutant enzyme." evidence="4">
    <original>N</original>
    <variation>K</variation>
    <location>
        <position position="42"/>
    </location>
</feature>
<feature type="sequence variant" id="VAR_007389" description="In MPS3A; severe; dbSNP:rs1057521146." evidence="21">
    <original>A</original>
    <variation>T</variation>
    <location>
        <position position="44"/>
    </location>
</feature>
<feature type="sequence variant" id="VAR_007390" description="In MPS3A; intermediate/severe; common mutation in Italy; dbSNP:rs104894637." evidence="2 14 21">
    <original>S</original>
    <variation>W</variation>
    <location>
        <position position="66"/>
    </location>
</feature>
<feature type="sequence variant" id="VAR_007391" description="In MPS3A; intermediate/severe; the mutant is enzymatically inactive; rapid degradation rather than decrease in synthesis is responsible for the low steady state level of the mutant protein in cells; the majority of newly synthesized protein probably occurs in the endoplasmic reticulum; dbSNP:rs104894636." evidence="2 3 7 12 14 21">
    <original>R</original>
    <variation>C</variation>
    <location>
        <position position="74"/>
    </location>
</feature>
<feature type="sequence variant" id="VAR_007392" description="In MPS3A; dbSNP:rs778336949." evidence="20">
    <original>R</original>
    <variation>H</variation>
    <location>
        <position position="74"/>
    </location>
</feature>
<feature type="sequence variant" id="VAR_007393" description="In MPS3A; severe; dbSNP:rs779703983." evidence="2">
    <original>T</original>
    <variation>P</variation>
    <location>
        <position position="79"/>
    </location>
</feature>
<feature type="sequence variant" id="VAR_007394" description="In MPS3A.">
    <location>
        <begin position="84"/>
        <end position="85"/>
    </location>
</feature>
<feature type="sequence variant" id="VAR_054673" description="In MPS3A." evidence="2">
    <original>H</original>
    <variation>Y</variation>
    <location>
        <position position="84"/>
    </location>
</feature>
<feature type="sequence variant" id="VAR_007395" description="In MPS3A." evidence="22">
    <original>Q</original>
    <variation>R</variation>
    <location>
        <position position="85"/>
    </location>
</feature>
<feature type="sequence variant" id="VAR_054674" description="In MPS3A; dbSNP:rs1299601360." evidence="10">
    <original>M</original>
    <variation>T</variation>
    <location>
        <position position="88"/>
    </location>
</feature>
<feature type="sequence variant" id="VAR_007396" description="In MPS3A; dbSNP:rs774010006." evidence="20">
    <original>G</original>
    <variation>R</variation>
    <location>
        <position position="90"/>
    </location>
</feature>
<feature type="sequence variant" id="VAR_054675" description="In MPS3A; shows 3.3% activity of the expressed wild-type enzyme; rapid degradation rather than decrease in synthesis is responsible for the low steady state level of the mutant protein in cells." evidence="7">
    <original>S</original>
    <variation>R</variation>
    <location>
        <position position="106"/>
    </location>
</feature>
<feature type="sequence variant" id="VAR_007397" description="In MPS3A; intermediate; dbSNP:rs761607612." evidence="2 21">
    <original>G</original>
    <variation>R</variation>
    <location>
        <position position="122"/>
    </location>
</feature>
<feature type="sequence variant" id="VAR_007398" description="In MPS3A; intermediate; dbSNP:rs104894642." evidence="5 21">
    <original>P</original>
    <variation>L</variation>
    <location>
        <position position="128"/>
    </location>
</feature>
<feature type="sequence variant" id="VAR_007399" description="In MPS3A; dbSNP:rs370636303." evidence="19">
    <original>V</original>
    <variation>M</variation>
    <location>
        <position position="131"/>
    </location>
</feature>
<feature type="sequence variant" id="VAR_007400" description="In MPS3A; dbSNP:rs775112689." evidence="19">
    <original>T</original>
    <variation>M</variation>
    <location>
        <position position="139"/>
    </location>
</feature>
<feature type="sequence variant" id="VAR_007401" description="In MPS3A; severe; dbSNP:rs749358773." evidence="21">
    <original>L</original>
    <variation>P</variation>
    <location>
        <position position="146"/>
    </location>
</feature>
<feature type="sequence variant" id="VAR_007402" description="In MPS3A; severe; dbSNP:rs104894638." evidence="21">
    <original>R</original>
    <variation>Q</variation>
    <location>
        <position position="150"/>
    </location>
</feature>
<feature type="sequence variant" id="VAR_054676" description="In MPS3A; dbSNP:rs1479831530." evidence="2">
    <original>R</original>
    <variation>W</variation>
    <location>
        <position position="150"/>
    </location>
</feature>
<feature type="sequence variant" id="VAR_054677" description="In MPS3A; the mutant is enzymatically inactive; rapid degradation rather than decrease in synthesis is responsible for the low steady state level of the mutant protein in cells; the mutant protein shows instability in the lysosomes." evidence="7">
    <original>L</original>
    <variation>P</variation>
    <location>
        <position position="163"/>
    </location>
</feature>
<feature type="sequence variant" id="VAR_007403" description="In MPS3A; severe; dbSNP:rs774773010." evidence="21">
    <original>D</original>
    <variation>N</variation>
    <location>
        <position position="179"/>
    </location>
</feature>
<feature type="sequence variant" id="VAR_007404" description="In MPS3A; intermediate; dbSNP:rs529855742." evidence="21">
    <original>R</original>
    <variation>C</variation>
    <location>
        <position position="182"/>
    </location>
</feature>
<feature type="sequence variant" id="VAR_054678" description="In MPS3A; the mutant is enzymatically inactive; rapid degradation rather than decrease in synthesis is responsible for the low steady state level of the mutant protein in cells; the majority of newly synthesized protein probably occurs in the endoplasmic reticulum; dbSNP:rs753666460." evidence="7">
    <original>G</original>
    <variation>R</variation>
    <location>
        <position position="191"/>
    </location>
</feature>
<feature type="sequence variant" id="VAR_007405" description="In MPS3A." evidence="20">
    <original>F</original>
    <variation>L</variation>
    <location>
        <position position="193"/>
    </location>
</feature>
<feature type="sequence variant" id="VAR_007406" description="In MPS3A; the mutant enzyme retains 8% residual activity; dbSNP:rs104894643." evidence="8 22">
    <original>R</original>
    <variation>P</variation>
    <location>
        <position position="206"/>
    </location>
</feature>
<feature type="sequence variant" id="VAR_007407" evidence="21">
    <original>V</original>
    <variation>A</variation>
    <location>
        <position position="226"/>
    </location>
</feature>
<feature type="sequence variant" id="VAR_007408" description="In MPS3A; severe; dbSNP:rs774602372." evidence="21">
    <original>P</original>
    <variation>R</variation>
    <location>
        <position position="227"/>
    </location>
</feature>
<feature type="sequence variant" id="VAR_007409" description="In MPS3A; dbSNP:rs113641837." evidence="19">
    <original>A</original>
    <variation>G</variation>
    <location>
        <position position="234"/>
    </location>
</feature>
<feature type="sequence variant" id="VAR_054679" description="In MPS3A; does not yield active enzyme; the reduction in 62 kDa precursor and 56 kDa mature forms suggests an increased degradation of the mutant enzyme; dbSNP:rs753472891." evidence="2 4">
    <original>D</original>
    <variation>N</variation>
    <location>
        <position position="235"/>
    </location>
</feature>
<feature type="sequence variant" id="VAR_007410" description="In MPS3A; dbSNP:rs763800418." evidence="20">
    <original>D</original>
    <variation>V</variation>
    <location>
        <position position="235"/>
    </location>
</feature>
<feature type="sequence variant" id="VAR_007411" description="In MPS3A; severe; common mutation in Western Europe and Australia; dbSNP:rs104894635." evidence="2 12 14">
    <original>R</original>
    <variation>H</variation>
    <location>
        <position position="245"/>
    </location>
</feature>
<feature type="sequence variant" id="VAR_054680" description="In MPS3A; dbSNP:rs144461610." evidence="12 14">
    <original>G</original>
    <variation>A</variation>
    <location>
        <position position="251"/>
    </location>
</feature>
<feature type="sequence variant" id="VAR_054681" description="In MPS3A; dbSNP:rs1046551417." evidence="2">
    <original>D</original>
    <variation>N</variation>
    <location>
        <position position="273"/>
    </location>
</feature>
<feature type="sequence variant" id="VAR_054682" description="In MPS3A." evidence="3">
    <original>P</original>
    <variation>S</variation>
    <location>
        <position position="288"/>
    </location>
</feature>
<feature type="sequence variant" id="VAR_054683" description="In MPS3A; does not yield active enzyme; the reduction in 62 kDa precursor and 56 kDa mature forms suggests an increased degradation of the mutant enzyme; dbSNP:rs143947056." evidence="4">
    <original>P</original>
    <variation>S</variation>
    <location>
        <position position="293"/>
    </location>
</feature>
<feature type="sequence variant" id="VAR_054684" description="In MPS3A." evidence="11">
    <original>P</original>
    <variation>T</variation>
    <location>
        <position position="293"/>
    </location>
</feature>
<feature type="sequence variant" id="VAR_007412" description="In MPS3A; associated with a slowly progressive clinical phenotype; rapidly degraded but small amounts of the mutant protein are correctly transported to the lysosome; low but significant residual enzymatic activity; dbSNP:rs138504221." evidence="2 12 14">
    <original>S</original>
    <variation>P</variation>
    <location>
        <position position="298"/>
    </location>
</feature>
<feature type="sequence variant" id="VAR_054685" description="In MPS3A." evidence="9">
    <original>E</original>
    <variation>V</variation>
    <location>
        <position position="300"/>
    </location>
</feature>
<feature type="sequence variant" id="VAR_054686" description="In dbSNP:rs745884647." evidence="11">
    <original>R</original>
    <variation>L</variation>
    <location>
        <position position="304"/>
    </location>
</feature>
<feature type="sequence variant" id="VAR_054687" description="In MPS3A." evidence="9">
    <original>Q</original>
    <variation>P</variation>
    <location>
        <position position="307"/>
    </location>
</feature>
<feature type="sequence variant" id="VAR_007413" description="In MPS3A; dbSNP:rs758756630." evidence="20">
    <original>T</original>
    <variation>A</variation>
    <location>
        <position position="321"/>
    </location>
</feature>
<feature type="sequence variant" id="VAR_054688" description="In MPS3A." evidence="2">
    <original>I</original>
    <variation>S</variation>
    <location>
        <position position="322"/>
    </location>
</feature>
<feature type="sequence variant" id="VAR_007414" description="In MPS3A." evidence="22">
    <original>A</original>
    <variation>P</variation>
    <location>
        <position position="354"/>
    </location>
</feature>
<feature type="sequence variant" id="VAR_054689" description="In MPS3A; dbSNP:rs766938111." evidence="2">
    <original>E</original>
    <variation>K</variation>
    <location>
        <position position="355"/>
    </location>
</feature>
<feature type="sequence variant" id="VAR_007415" description="In dbSNP:rs9894254.">
    <original>V</original>
    <variation>I</variation>
    <location>
        <position position="361"/>
    </location>
</feature>
<feature type="sequence variant" id="VAR_007416" description="In MPS3A; dbSNP:rs1428699412." evidence="20">
    <original>S</original>
    <variation>R</variation>
    <location>
        <position position="364"/>
    </location>
</feature>
<feature type="sequence variant" id="VAR_079426" description="In MPS3A." evidence="16">
    <location>
        <begin position="365"/>
        <end position="502"/>
    </location>
</feature>
<feature type="sequence variant" id="VAR_007417" description="In MPS3A; intermediate; dbSNP:rs104894640." evidence="5 21">
    <original>E</original>
    <variation>K</variation>
    <location>
        <position position="369"/>
    </location>
</feature>
<feature type="sequence variant" id="VAR_061884" description="In dbSNP:rs58786455.">
    <original>M</original>
    <variation>I</variation>
    <location>
        <position position="372"/>
    </location>
</feature>
<feature type="sequence variant" id="VAR_054690" description="In MPS3A; dbSNP:rs1237611456." evidence="2">
    <original>Y</original>
    <variation>H</variation>
    <location>
        <position position="374"/>
    </location>
</feature>
<feature type="sequence variant" id="VAR_007418" description="In MPS3A; severe; does not yield active enzyme; the reduction in 62 kDa precursor and 56 kDa mature forms suggests an increased degradation of the mutant enzyme; dbSNP:rs772311757." evidence="4 21">
    <original>R</original>
    <variation>C</variation>
    <location>
        <position position="377"/>
    </location>
</feature>
<feature type="sequence variant" id="VAR_007419" description="In MPS3A; dbSNP:rs746037899." evidence="19">
    <original>R</original>
    <variation>H</variation>
    <location>
        <position position="377"/>
    </location>
</feature>
<feature type="sequence variant" id="VAR_007420" description="In MPS3A; dbSNP:rs144143780." evidence="19">
    <original>Q</original>
    <variation>R</variation>
    <location>
        <position position="380"/>
    </location>
</feature>
<feature type="sequence variant" id="VAR_054691" description="In MPS3A.">
    <original>H</original>
    <variation>HQR</variation>
    <location>
        <position position="381"/>
    </location>
</feature>
<feature type="sequence variant" id="VAR_007421" description="In MPS3A." evidence="22">
    <original>L</original>
    <variation>R</variation>
    <location>
        <position position="386"/>
    </location>
</feature>
<feature type="sequence variant" id="VAR_054692" description="In dbSNP:rs62620232." evidence="11">
    <original>V</original>
    <variation>M</variation>
    <location>
        <position position="387"/>
    </location>
</feature>
<feature type="sequence variant" id="VAR_007422" description="In MPS3A; dbSNP:rs764057581." evidence="20">
    <original>N</original>
    <variation>K</variation>
    <location>
        <position position="389"/>
    </location>
</feature>
<feature type="sequence variant" id="VAR_052517" description="In dbSNP:rs34297805.">
    <original>M</original>
    <variation>I</variation>
    <location>
        <position position="394"/>
    </location>
</feature>
<feature type="sequence variant" id="VAR_054693" description="In MPS3A; the mutant is enzymatically inactive; rapid degradation rather than decrease in synthesis is responsible for the low steady state level of the mutant protein in cells." evidence="7">
    <location>
        <position position="403"/>
    </location>
</feature>
<feature type="sequence variant" id="VAR_054694" description="In MPS3A.">
    <original>YRAR</original>
    <variation>W</variation>
    <location>
        <begin position="432"/>
        <end position="435"/>
    </location>
</feature>
<feature type="sequence variant" id="VAR_054695" description="In MPS3A; severe; dbSNP:rs104894641." evidence="5">
    <original>R</original>
    <variation>Q</variation>
    <location>
        <position position="433"/>
    </location>
</feature>
<feature type="sequence variant" id="VAR_054696" description="In MPS3A; the mutant is enzymatically inactive; rapid degradation rather than decrease in synthesis is responsible for the low steady state level of the mutant protein in cells; the majority of newly synthesized protein probably occurs in the endoplasmic reticulum; dbSNP:rs777267343." evidence="2 7">
    <original>R</original>
    <variation>W</variation>
    <location>
        <position position="433"/>
    </location>
</feature>
<feature type="sequence variant" id="VAR_054697" description="In MPS3A." evidence="2">
    <location>
        <begin position="436"/>
        <end position="438"/>
    </location>
</feature>
<feature type="sequence variant" id="VAR_007423" description="In MPS3A; dbSNP:rs104894639." evidence="18">
    <original>E</original>
    <variation>K</variation>
    <location>
        <position position="447"/>
    </location>
</feature>
<feature type="sequence variant" id="VAR_007424" description="Does not affect enzyme activity; cells transfected with the mutant enzyme contain a 62 kDa precursor and a 56 kDa mature form as cells transfected with the wild-type enzyme; dbSNP:rs7503034." evidence="2 4 5 8 18 21">
    <original>R</original>
    <variation>H</variation>
    <location>
        <position position="456"/>
    </location>
</feature>
<feature type="sequence variant" id="VAR_079427" description="In MPS3A; uncertain significance; dbSNP:rs1064795109." evidence="16">
    <original>D</original>
    <variation>N</variation>
    <location>
        <position position="477"/>
    </location>
</feature>
<feature type="sequence variant" id="VAR_054698" description="In MPS3A." evidence="2">
    <original>V</original>
    <variation>F</variation>
    <location>
        <position position="486"/>
    </location>
</feature>
<feature type="strand" evidence="26">
    <location>
        <begin position="24"/>
        <end position="32"/>
    </location>
</feature>
<feature type="helix" evidence="26">
    <location>
        <begin position="38"/>
        <end position="40"/>
    </location>
</feature>
<feature type="strand" evidence="26">
    <location>
        <begin position="43"/>
        <end position="45"/>
    </location>
</feature>
<feature type="helix" evidence="26">
    <location>
        <begin position="48"/>
        <end position="54"/>
    </location>
</feature>
<feature type="strand" evidence="26">
    <location>
        <begin position="57"/>
        <end position="64"/>
    </location>
</feature>
<feature type="helix" evidence="26">
    <location>
        <begin position="70"/>
        <end position="77"/>
    </location>
</feature>
<feature type="helix" evidence="26">
    <location>
        <begin position="83"/>
        <end position="86"/>
    </location>
</feature>
<feature type="turn" evidence="26">
    <location>
        <begin position="94"/>
        <end position="96"/>
    </location>
</feature>
<feature type="helix" evidence="26">
    <location>
        <begin position="107"/>
        <end position="113"/>
    </location>
</feature>
<feature type="strand" evidence="26">
    <location>
        <begin position="117"/>
        <end position="122"/>
    </location>
</feature>
<feature type="turn" evidence="26">
    <location>
        <begin position="129"/>
        <end position="131"/>
    </location>
</feature>
<feature type="strand" evidence="26">
    <location>
        <begin position="135"/>
        <end position="139"/>
    </location>
</feature>
<feature type="helix" evidence="26">
    <location>
        <begin position="145"/>
        <end position="149"/>
    </location>
</feature>
<feature type="helix" evidence="26">
    <location>
        <begin position="152"/>
        <end position="164"/>
    </location>
</feature>
<feature type="strand" evidence="26">
    <location>
        <begin position="171"/>
        <end position="176"/>
    </location>
</feature>
<feature type="turn" evidence="26">
    <location>
        <begin position="184"/>
        <end position="186"/>
    </location>
</feature>
<feature type="helix" evidence="26">
    <location>
        <begin position="188"/>
        <end position="190"/>
    </location>
</feature>
<feature type="turn" evidence="26">
    <location>
        <begin position="195"/>
        <end position="198"/>
    </location>
</feature>
<feature type="strand" evidence="26">
    <location>
        <begin position="199"/>
        <end position="201"/>
    </location>
</feature>
<feature type="turn" evidence="26">
    <location>
        <begin position="202"/>
        <end position="204"/>
    </location>
</feature>
<feature type="turn" evidence="26">
    <location>
        <begin position="217"/>
        <end position="219"/>
    </location>
</feature>
<feature type="helix" evidence="26">
    <location>
        <begin position="230"/>
        <end position="259"/>
    </location>
</feature>
<feature type="helix" evidence="26">
    <location>
        <begin position="263"/>
        <end position="265"/>
    </location>
</feature>
<feature type="strand" evidence="26">
    <location>
        <begin position="266"/>
        <end position="274"/>
    </location>
</feature>
<feature type="helix" evidence="26">
    <location>
        <begin position="287"/>
        <end position="290"/>
    </location>
</feature>
<feature type="strand" evidence="26">
    <location>
        <begin position="294"/>
        <end position="297"/>
    </location>
</feature>
<feature type="turn" evidence="26">
    <location>
        <begin position="303"/>
        <end position="306"/>
    </location>
</feature>
<feature type="strand" evidence="26">
    <location>
        <begin position="307"/>
        <end position="314"/>
    </location>
</feature>
<feature type="helix" evidence="26">
    <location>
        <begin position="315"/>
        <end position="317"/>
    </location>
</feature>
<feature type="helix" evidence="26">
    <location>
        <begin position="318"/>
        <end position="325"/>
    </location>
</feature>
<feature type="strand" evidence="26">
    <location>
        <begin position="334"/>
        <end position="336"/>
    </location>
</feature>
<feature type="helix" evidence="26">
    <location>
        <begin position="349"/>
        <end position="352"/>
    </location>
</feature>
<feature type="strand" evidence="26">
    <location>
        <begin position="360"/>
        <end position="369"/>
    </location>
</feature>
<feature type="strand" evidence="26">
    <location>
        <begin position="373"/>
        <end position="381"/>
    </location>
</feature>
<feature type="strand" evidence="26">
    <location>
        <begin position="384"/>
        <end position="389"/>
    </location>
</feature>
<feature type="turn" evidence="26">
    <location>
        <begin position="390"/>
        <end position="393"/>
    </location>
</feature>
<feature type="helix" evidence="26">
    <location>
        <begin position="400"/>
        <end position="403"/>
    </location>
</feature>
<feature type="helix" evidence="26">
    <location>
        <begin position="406"/>
        <end position="417"/>
    </location>
</feature>
<feature type="helix" evidence="26">
    <location>
        <begin position="427"/>
        <end position="431"/>
    </location>
</feature>
<feature type="strand" evidence="26">
    <location>
        <begin position="435"/>
        <end position="440"/>
    </location>
</feature>
<feature type="turn" evidence="26">
    <location>
        <begin position="441"/>
        <end position="443"/>
    </location>
</feature>
<feature type="helix" evidence="26">
    <location>
        <begin position="455"/>
        <end position="457"/>
    </location>
</feature>
<feature type="helix" evidence="26">
    <location>
        <begin position="458"/>
        <end position="474"/>
    </location>
</feature>
<feature type="turn" evidence="26">
    <location>
        <begin position="478"/>
        <end position="484"/>
    </location>
</feature>
<feature type="strand" evidence="26">
    <location>
        <begin position="485"/>
        <end position="487"/>
    </location>
</feature>
<feature type="strand" evidence="26">
    <location>
        <begin position="491"/>
        <end position="497"/>
    </location>
</feature>
<feature type="strand" evidence="26">
    <location>
        <begin position="500"/>
        <end position="502"/>
    </location>
</feature>
<keyword id="KW-0002">3D-structure</keyword>
<keyword id="KW-0106">Calcium</keyword>
<keyword id="KW-0903">Direct protein sequencing</keyword>
<keyword id="KW-0225">Disease variant</keyword>
<keyword id="KW-1015">Disulfide bond</keyword>
<keyword id="KW-0325">Glycoprotein</keyword>
<keyword id="KW-0378">Hydrolase</keyword>
<keyword id="KW-0458">Lysosome</keyword>
<keyword id="KW-0479">Metal-binding</keyword>
<keyword id="KW-0510">Mucopolysaccharidosis</keyword>
<keyword id="KW-1267">Proteomics identification</keyword>
<keyword id="KW-1185">Reference proteome</keyword>
<keyword id="KW-0732">Signal</keyword>
<organism>
    <name type="scientific">Homo sapiens</name>
    <name type="common">Human</name>
    <dbReference type="NCBI Taxonomy" id="9606"/>
    <lineage>
        <taxon>Eukaryota</taxon>
        <taxon>Metazoa</taxon>
        <taxon>Chordata</taxon>
        <taxon>Craniata</taxon>
        <taxon>Vertebrata</taxon>
        <taxon>Euteleostomi</taxon>
        <taxon>Mammalia</taxon>
        <taxon>Eutheria</taxon>
        <taxon>Euarchontoglires</taxon>
        <taxon>Primates</taxon>
        <taxon>Haplorrhini</taxon>
        <taxon>Catarrhini</taxon>
        <taxon>Hominidae</taxon>
        <taxon>Homo</taxon>
    </lineage>
</organism>